<dbReference type="EC" id="3.6.4.13"/>
<dbReference type="EMBL" id="AE016816">
    <property type="protein sequence ID" value="AAS51479.1"/>
    <property type="molecule type" value="Genomic_DNA"/>
</dbReference>
<dbReference type="RefSeq" id="NP_983655.1">
    <property type="nucleotide sequence ID" value="NM_209008.1"/>
</dbReference>
<dbReference type="SMR" id="Q75BL8"/>
<dbReference type="FunCoup" id="Q75BL8">
    <property type="interactions" value="1384"/>
</dbReference>
<dbReference type="STRING" id="284811.Q75BL8"/>
<dbReference type="EnsemblFungi" id="AAS51479">
    <property type="protein sequence ID" value="AAS51479"/>
    <property type="gene ID" value="AGOS_ACR253C"/>
</dbReference>
<dbReference type="GeneID" id="4619790"/>
<dbReference type="KEGG" id="ago:AGOS_ACR253C"/>
<dbReference type="eggNOG" id="KOG0327">
    <property type="taxonomic scope" value="Eukaryota"/>
</dbReference>
<dbReference type="HOGENOM" id="CLU_003041_1_0_1"/>
<dbReference type="InParanoid" id="Q75BL8"/>
<dbReference type="OMA" id="FGCQALV"/>
<dbReference type="OrthoDB" id="10265785at2759"/>
<dbReference type="Proteomes" id="UP000000591">
    <property type="component" value="Chromosome III"/>
</dbReference>
<dbReference type="GO" id="GO:0010494">
    <property type="term" value="C:cytoplasmic stress granule"/>
    <property type="evidence" value="ECO:0000318"/>
    <property type="project" value="GO_Central"/>
</dbReference>
<dbReference type="GO" id="GO:0005524">
    <property type="term" value="F:ATP binding"/>
    <property type="evidence" value="ECO:0007669"/>
    <property type="project" value="UniProtKB-KW"/>
</dbReference>
<dbReference type="GO" id="GO:0016887">
    <property type="term" value="F:ATP hydrolysis activity"/>
    <property type="evidence" value="ECO:0007669"/>
    <property type="project" value="RHEA"/>
</dbReference>
<dbReference type="GO" id="GO:0003723">
    <property type="term" value="F:RNA binding"/>
    <property type="evidence" value="ECO:0007669"/>
    <property type="project" value="UniProtKB-KW"/>
</dbReference>
<dbReference type="GO" id="GO:0003724">
    <property type="term" value="F:RNA helicase activity"/>
    <property type="evidence" value="ECO:0007669"/>
    <property type="project" value="UniProtKB-EC"/>
</dbReference>
<dbReference type="GO" id="GO:0003743">
    <property type="term" value="F:translation initiation factor activity"/>
    <property type="evidence" value="ECO:0000318"/>
    <property type="project" value="GO_Central"/>
</dbReference>
<dbReference type="GO" id="GO:0002183">
    <property type="term" value="P:cytoplasmic translational initiation"/>
    <property type="evidence" value="ECO:0000318"/>
    <property type="project" value="GO_Central"/>
</dbReference>
<dbReference type="CDD" id="cd18046">
    <property type="entry name" value="DEADc_EIF4AII_EIF4AI_DDX2"/>
    <property type="match status" value="1"/>
</dbReference>
<dbReference type="CDD" id="cd18787">
    <property type="entry name" value="SF2_C_DEAD"/>
    <property type="match status" value="1"/>
</dbReference>
<dbReference type="FunFam" id="3.40.50.300:FF:000089">
    <property type="entry name" value="Eukaryotic initiation factor 4A-II"/>
    <property type="match status" value="1"/>
</dbReference>
<dbReference type="FunFam" id="3.40.50.300:FF:000031">
    <property type="entry name" value="Eukaryotic initiation factor 4A-III"/>
    <property type="match status" value="1"/>
</dbReference>
<dbReference type="Gene3D" id="3.40.50.300">
    <property type="entry name" value="P-loop containing nucleotide triphosphate hydrolases"/>
    <property type="match status" value="2"/>
</dbReference>
<dbReference type="InterPro" id="IPR011545">
    <property type="entry name" value="DEAD/DEAH_box_helicase_dom"/>
</dbReference>
<dbReference type="InterPro" id="IPR044728">
    <property type="entry name" value="EIF4A_DEADc"/>
</dbReference>
<dbReference type="InterPro" id="IPR014001">
    <property type="entry name" value="Helicase_ATP-bd"/>
</dbReference>
<dbReference type="InterPro" id="IPR001650">
    <property type="entry name" value="Helicase_C-like"/>
</dbReference>
<dbReference type="InterPro" id="IPR027417">
    <property type="entry name" value="P-loop_NTPase"/>
</dbReference>
<dbReference type="InterPro" id="IPR000629">
    <property type="entry name" value="RNA-helicase_DEAD-box_CS"/>
</dbReference>
<dbReference type="InterPro" id="IPR014014">
    <property type="entry name" value="RNA_helicase_DEAD_Q_motif"/>
</dbReference>
<dbReference type="PANTHER" id="PTHR47958">
    <property type="entry name" value="ATP-DEPENDENT RNA HELICASE DBP3"/>
    <property type="match status" value="1"/>
</dbReference>
<dbReference type="Pfam" id="PF00270">
    <property type="entry name" value="DEAD"/>
    <property type="match status" value="1"/>
</dbReference>
<dbReference type="Pfam" id="PF00271">
    <property type="entry name" value="Helicase_C"/>
    <property type="match status" value="1"/>
</dbReference>
<dbReference type="SMART" id="SM00487">
    <property type="entry name" value="DEXDc"/>
    <property type="match status" value="1"/>
</dbReference>
<dbReference type="SMART" id="SM00490">
    <property type="entry name" value="HELICc"/>
    <property type="match status" value="1"/>
</dbReference>
<dbReference type="SUPFAM" id="SSF52540">
    <property type="entry name" value="P-loop containing nucleoside triphosphate hydrolases"/>
    <property type="match status" value="1"/>
</dbReference>
<dbReference type="PROSITE" id="PS00039">
    <property type="entry name" value="DEAD_ATP_HELICASE"/>
    <property type="match status" value="1"/>
</dbReference>
<dbReference type="PROSITE" id="PS51192">
    <property type="entry name" value="HELICASE_ATP_BIND_1"/>
    <property type="match status" value="1"/>
</dbReference>
<dbReference type="PROSITE" id="PS51194">
    <property type="entry name" value="HELICASE_CTER"/>
    <property type="match status" value="1"/>
</dbReference>
<dbReference type="PROSITE" id="PS51195">
    <property type="entry name" value="Q_MOTIF"/>
    <property type="match status" value="1"/>
</dbReference>
<organism>
    <name type="scientific">Eremothecium gossypii (strain ATCC 10895 / CBS 109.51 / FGSC 9923 / NRRL Y-1056)</name>
    <name type="common">Yeast</name>
    <name type="synonym">Ashbya gossypii</name>
    <dbReference type="NCBI Taxonomy" id="284811"/>
    <lineage>
        <taxon>Eukaryota</taxon>
        <taxon>Fungi</taxon>
        <taxon>Dikarya</taxon>
        <taxon>Ascomycota</taxon>
        <taxon>Saccharomycotina</taxon>
        <taxon>Saccharomycetes</taxon>
        <taxon>Saccharomycetales</taxon>
        <taxon>Saccharomycetaceae</taxon>
        <taxon>Eremothecium</taxon>
    </lineage>
</organism>
<gene>
    <name type="primary">TIF1</name>
    <name type="synonym">TIF41</name>
    <name type="ordered locus">ACR253C</name>
</gene>
<sequence length="396" mass="44603">MSDSITNPENSEIQTNYDKIVHKFDELKLKEVLLRGIYGYGFVDPSAIQQRAILPIIEGHDVLAQAQSGTGKTGTFSIAALQRIDESIKAPQALILAPTRELALQIQKVVMALALHMDVKVHACIGGTDPREDAEALRAGAQIVVGTPGRVFDMIERRNFKTDHIKMFILDEADEMLSSGFKEQIYKIFTMLPPTTQVVLLSATMPKEVLDVTDKFMNKPVRILVKKDALTLEGIQQYYINVESEEYKYDCLSDLYDSISVTQAVIFCNTRRKVEELTKRLTDDSFTVSAIYSDLPQAQRDTIMKEFRTGSSRILISTDLLARGIDVQQVSLVINYDLPNNKENYIHRIGRGGRFGRKGVAINLVTDRDVGDMRELERFYSTQIEELPANIADLFD</sequence>
<keyword id="KW-0067">ATP-binding</keyword>
<keyword id="KW-0963">Cytoplasm</keyword>
<keyword id="KW-0347">Helicase</keyword>
<keyword id="KW-0378">Hydrolase</keyword>
<keyword id="KW-0396">Initiation factor</keyword>
<keyword id="KW-0547">Nucleotide-binding</keyword>
<keyword id="KW-0648">Protein biosynthesis</keyword>
<keyword id="KW-1185">Reference proteome</keyword>
<keyword id="KW-0694">RNA-binding</keyword>
<name>IF4A_EREGS</name>
<comment type="function">
    <text evidence="1">ATP-dependent RNA helicase which is a subunit of the eIF4F complex involved in cap recognition and is required for mRNA binding to ribosome. In the current model of translation initiation, eIF4A unwinds RNA secondary structures in the 5'-UTR of mRNAs which is necessary to allow efficient binding of the small ribosomal subunit, and subsequent scanning for the initiator codon (By similarity).</text>
</comment>
<comment type="catalytic activity">
    <reaction>
        <text>ATP + H2O = ADP + phosphate + H(+)</text>
        <dbReference type="Rhea" id="RHEA:13065"/>
        <dbReference type="ChEBI" id="CHEBI:15377"/>
        <dbReference type="ChEBI" id="CHEBI:15378"/>
        <dbReference type="ChEBI" id="CHEBI:30616"/>
        <dbReference type="ChEBI" id="CHEBI:43474"/>
        <dbReference type="ChEBI" id="CHEBI:456216"/>
        <dbReference type="EC" id="3.6.4.13"/>
    </reaction>
</comment>
<comment type="subunit">
    <text evidence="1">Component of the eIF4F complex, which composition varies with external and internal environmental conditions. It is composed of at least eIF4A, eIF4E and eIF4G (By similarity).</text>
</comment>
<comment type="subcellular location">
    <subcellularLocation>
        <location evidence="1">Cytoplasm</location>
    </subcellularLocation>
</comment>
<comment type="domain">
    <text>The Q motif is unique to and characteristic of the DEAD box family of RNA helicases and controls ATP binding and hydrolysis.</text>
</comment>
<comment type="similarity">
    <text evidence="4">Belongs to the DEAD box helicase family. eIF4A subfamily.</text>
</comment>
<proteinExistence type="inferred from homology"/>
<protein>
    <recommendedName>
        <fullName>ATP-dependent RNA helicase eIF4A</fullName>
        <ecNumber>3.6.4.13</ecNumber>
    </recommendedName>
    <alternativeName>
        <fullName>Eukaryotic initiation factor 4A</fullName>
        <shortName>eIF-4A</shortName>
    </alternativeName>
    <alternativeName>
        <fullName>Translation initiation factor 1</fullName>
    </alternativeName>
</protein>
<feature type="chain" id="PRO_0000227941" description="ATP-dependent RNA helicase eIF4A">
    <location>
        <begin position="1"/>
        <end position="396"/>
    </location>
</feature>
<feature type="domain" description="Helicase ATP-binding" evidence="2">
    <location>
        <begin position="53"/>
        <end position="223"/>
    </location>
</feature>
<feature type="domain" description="Helicase C-terminal" evidence="3">
    <location>
        <begin position="234"/>
        <end position="395"/>
    </location>
</feature>
<feature type="short sequence motif" description="Q motif">
    <location>
        <begin position="22"/>
        <end position="50"/>
    </location>
</feature>
<feature type="short sequence motif" description="DEAD box">
    <location>
        <begin position="171"/>
        <end position="174"/>
    </location>
</feature>
<feature type="binding site" evidence="2">
    <location>
        <begin position="66"/>
        <end position="73"/>
    </location>
    <ligand>
        <name>ATP</name>
        <dbReference type="ChEBI" id="CHEBI:30616"/>
    </ligand>
</feature>
<reference key="1">
    <citation type="journal article" date="2004" name="Science">
        <title>The Ashbya gossypii genome as a tool for mapping the ancient Saccharomyces cerevisiae genome.</title>
        <authorList>
            <person name="Dietrich F.S."/>
            <person name="Voegeli S."/>
            <person name="Brachat S."/>
            <person name="Lerch A."/>
            <person name="Gates K."/>
            <person name="Steiner S."/>
            <person name="Mohr C."/>
            <person name="Poehlmann R."/>
            <person name="Luedi P."/>
            <person name="Choi S."/>
            <person name="Wing R.A."/>
            <person name="Flavier A."/>
            <person name="Gaffney T.D."/>
            <person name="Philippsen P."/>
        </authorList>
    </citation>
    <scope>NUCLEOTIDE SEQUENCE [LARGE SCALE GENOMIC DNA]</scope>
    <source>
        <strain>ATCC 10895 / CBS 109.51 / FGSC 9923 / NRRL Y-1056</strain>
    </source>
</reference>
<reference key="2">
    <citation type="journal article" date="2013" name="G3 (Bethesda)">
        <title>Genomes of Ashbya fungi isolated from insects reveal four mating-type loci, numerous translocations, lack of transposons, and distinct gene duplications.</title>
        <authorList>
            <person name="Dietrich F.S."/>
            <person name="Voegeli S."/>
            <person name="Kuo S."/>
            <person name="Philippsen P."/>
        </authorList>
    </citation>
    <scope>GENOME REANNOTATION</scope>
    <source>
        <strain>ATCC 10895 / CBS 109.51 / FGSC 9923 / NRRL Y-1056</strain>
    </source>
</reference>
<evidence type="ECO:0000250" key="1"/>
<evidence type="ECO:0000255" key="2">
    <source>
        <dbReference type="PROSITE-ProRule" id="PRU00541"/>
    </source>
</evidence>
<evidence type="ECO:0000255" key="3">
    <source>
        <dbReference type="PROSITE-ProRule" id="PRU00542"/>
    </source>
</evidence>
<evidence type="ECO:0000305" key="4"/>
<accession>Q75BL8</accession>